<protein>
    <recommendedName>
        <fullName evidence="1">Anthranilate phosphoribosyltransferase</fullName>
        <ecNumber evidence="1">2.4.2.18</ecNumber>
    </recommendedName>
</protein>
<keyword id="KW-0028">Amino-acid biosynthesis</keyword>
<keyword id="KW-0057">Aromatic amino acid biosynthesis</keyword>
<keyword id="KW-0328">Glycosyltransferase</keyword>
<keyword id="KW-0460">Magnesium</keyword>
<keyword id="KW-0479">Metal-binding</keyword>
<keyword id="KW-1185">Reference proteome</keyword>
<keyword id="KW-0808">Transferase</keyword>
<keyword id="KW-0822">Tryptophan biosynthesis</keyword>
<organism>
    <name type="scientific">Methanosphaera stadtmanae (strain ATCC 43021 / DSM 3091 / JCM 11832 / MCB-3)</name>
    <dbReference type="NCBI Taxonomy" id="339860"/>
    <lineage>
        <taxon>Archaea</taxon>
        <taxon>Methanobacteriati</taxon>
        <taxon>Methanobacteriota</taxon>
        <taxon>Methanomada group</taxon>
        <taxon>Methanobacteria</taxon>
        <taxon>Methanobacteriales</taxon>
        <taxon>Methanobacteriaceae</taxon>
        <taxon>Methanosphaera</taxon>
    </lineage>
</organism>
<accession>Q2NFE4</accession>
<feature type="chain" id="PRO_1000043034" description="Anthranilate phosphoribosyltransferase">
    <location>
        <begin position="1"/>
        <end position="349"/>
    </location>
</feature>
<feature type="binding site" evidence="1">
    <location>
        <position position="82"/>
    </location>
    <ligand>
        <name>5-phospho-alpha-D-ribose 1-diphosphate</name>
        <dbReference type="ChEBI" id="CHEBI:58017"/>
    </ligand>
</feature>
<feature type="binding site" evidence="1">
    <location>
        <position position="82"/>
    </location>
    <ligand>
        <name>anthranilate</name>
        <dbReference type="ChEBI" id="CHEBI:16567"/>
        <label>1</label>
    </ligand>
</feature>
<feature type="binding site" evidence="1">
    <location>
        <begin position="85"/>
        <end position="86"/>
    </location>
    <ligand>
        <name>5-phospho-alpha-D-ribose 1-diphosphate</name>
        <dbReference type="ChEBI" id="CHEBI:58017"/>
    </ligand>
</feature>
<feature type="binding site" evidence="1">
    <location>
        <position position="90"/>
    </location>
    <ligand>
        <name>5-phospho-alpha-D-ribose 1-diphosphate</name>
        <dbReference type="ChEBI" id="CHEBI:58017"/>
    </ligand>
</feature>
<feature type="binding site" evidence="1">
    <location>
        <begin position="92"/>
        <end position="95"/>
    </location>
    <ligand>
        <name>5-phospho-alpha-D-ribose 1-diphosphate</name>
        <dbReference type="ChEBI" id="CHEBI:58017"/>
    </ligand>
</feature>
<feature type="binding site" evidence="1">
    <location>
        <position position="94"/>
    </location>
    <ligand>
        <name>Mg(2+)</name>
        <dbReference type="ChEBI" id="CHEBI:18420"/>
        <label>1</label>
    </ligand>
</feature>
<feature type="binding site" evidence="1">
    <location>
        <begin position="110"/>
        <end position="118"/>
    </location>
    <ligand>
        <name>5-phospho-alpha-D-ribose 1-diphosphate</name>
        <dbReference type="ChEBI" id="CHEBI:58017"/>
    </ligand>
</feature>
<feature type="binding site" evidence="1">
    <location>
        <position position="113"/>
    </location>
    <ligand>
        <name>anthranilate</name>
        <dbReference type="ChEBI" id="CHEBI:16567"/>
        <label>1</label>
    </ligand>
</feature>
<feature type="binding site" evidence="1">
    <location>
        <position position="122"/>
    </location>
    <ligand>
        <name>5-phospho-alpha-D-ribose 1-diphosphate</name>
        <dbReference type="ChEBI" id="CHEBI:58017"/>
    </ligand>
</feature>
<feature type="binding site" evidence="1">
    <location>
        <position position="168"/>
    </location>
    <ligand>
        <name>anthranilate</name>
        <dbReference type="ChEBI" id="CHEBI:16567"/>
        <label>2</label>
    </ligand>
</feature>
<feature type="binding site" evidence="1">
    <location>
        <position position="232"/>
    </location>
    <ligand>
        <name>Mg(2+)</name>
        <dbReference type="ChEBI" id="CHEBI:18420"/>
        <label>2</label>
    </ligand>
</feature>
<feature type="binding site" evidence="1">
    <location>
        <position position="233"/>
    </location>
    <ligand>
        <name>Mg(2+)</name>
        <dbReference type="ChEBI" id="CHEBI:18420"/>
        <label>1</label>
    </ligand>
</feature>
<feature type="binding site" evidence="1">
    <location>
        <position position="233"/>
    </location>
    <ligand>
        <name>Mg(2+)</name>
        <dbReference type="ChEBI" id="CHEBI:18420"/>
        <label>2</label>
    </ligand>
</feature>
<reference key="1">
    <citation type="journal article" date="2006" name="J. Bacteriol.">
        <title>The genome sequence of Methanosphaera stadtmanae reveals why this human intestinal archaeon is restricted to methanol and H2 for methane formation and ATP synthesis.</title>
        <authorList>
            <person name="Fricke W.F."/>
            <person name="Seedorf H."/>
            <person name="Henne A."/>
            <person name="Kruer M."/>
            <person name="Liesegang H."/>
            <person name="Hedderich R."/>
            <person name="Gottschalk G."/>
            <person name="Thauer R.K."/>
        </authorList>
    </citation>
    <scope>NUCLEOTIDE SEQUENCE [LARGE SCALE GENOMIC DNA]</scope>
    <source>
        <strain>ATCC 43021 / DSM 3091 / JCM 11832 / MCB-3</strain>
    </source>
</reference>
<name>TRPD_METST</name>
<proteinExistence type="inferred from homology"/>
<gene>
    <name evidence="1" type="primary">trpD</name>
    <name type="ordered locus">Msp_1076</name>
</gene>
<dbReference type="EC" id="2.4.2.18" evidence="1"/>
<dbReference type="EMBL" id="CP000102">
    <property type="protein sequence ID" value="ABC57459.1"/>
    <property type="molecule type" value="Genomic_DNA"/>
</dbReference>
<dbReference type="RefSeq" id="WP_011406658.1">
    <property type="nucleotide sequence ID" value="NC_007681.1"/>
</dbReference>
<dbReference type="SMR" id="Q2NFE4"/>
<dbReference type="STRING" id="339860.Msp_1076"/>
<dbReference type="GeneID" id="41325645"/>
<dbReference type="KEGG" id="mst:Msp_1076"/>
<dbReference type="eggNOG" id="arCOG02012">
    <property type="taxonomic scope" value="Archaea"/>
</dbReference>
<dbReference type="HOGENOM" id="CLU_034315_2_1_2"/>
<dbReference type="OrthoDB" id="8214at2157"/>
<dbReference type="UniPathway" id="UPA00035">
    <property type="reaction ID" value="UER00041"/>
</dbReference>
<dbReference type="Proteomes" id="UP000001931">
    <property type="component" value="Chromosome"/>
</dbReference>
<dbReference type="GO" id="GO:0005829">
    <property type="term" value="C:cytosol"/>
    <property type="evidence" value="ECO:0007669"/>
    <property type="project" value="TreeGrafter"/>
</dbReference>
<dbReference type="GO" id="GO:0004048">
    <property type="term" value="F:anthranilate phosphoribosyltransferase activity"/>
    <property type="evidence" value="ECO:0007669"/>
    <property type="project" value="UniProtKB-UniRule"/>
</dbReference>
<dbReference type="GO" id="GO:0000287">
    <property type="term" value="F:magnesium ion binding"/>
    <property type="evidence" value="ECO:0007669"/>
    <property type="project" value="UniProtKB-UniRule"/>
</dbReference>
<dbReference type="GO" id="GO:0000162">
    <property type="term" value="P:L-tryptophan biosynthetic process"/>
    <property type="evidence" value="ECO:0007669"/>
    <property type="project" value="UniProtKB-UniRule"/>
</dbReference>
<dbReference type="Gene3D" id="3.40.1030.10">
    <property type="entry name" value="Nucleoside phosphorylase/phosphoribosyltransferase catalytic domain"/>
    <property type="match status" value="1"/>
</dbReference>
<dbReference type="Gene3D" id="1.20.970.10">
    <property type="entry name" value="Transferase, Pyrimidine Nucleoside Phosphorylase, Chain C"/>
    <property type="match status" value="1"/>
</dbReference>
<dbReference type="HAMAP" id="MF_00211">
    <property type="entry name" value="TrpD"/>
    <property type="match status" value="1"/>
</dbReference>
<dbReference type="InterPro" id="IPR005940">
    <property type="entry name" value="Anthranilate_Pribosyl_Tfrase"/>
</dbReference>
<dbReference type="InterPro" id="IPR000312">
    <property type="entry name" value="Glycosyl_Trfase_fam3"/>
</dbReference>
<dbReference type="InterPro" id="IPR017459">
    <property type="entry name" value="Glycosyl_Trfase_fam3_N_dom"/>
</dbReference>
<dbReference type="InterPro" id="IPR036320">
    <property type="entry name" value="Glycosyl_Trfase_fam3_N_dom_sf"/>
</dbReference>
<dbReference type="InterPro" id="IPR035902">
    <property type="entry name" value="Nuc_phospho_transferase"/>
</dbReference>
<dbReference type="NCBIfam" id="TIGR01245">
    <property type="entry name" value="trpD"/>
    <property type="match status" value="1"/>
</dbReference>
<dbReference type="PANTHER" id="PTHR43285">
    <property type="entry name" value="ANTHRANILATE PHOSPHORIBOSYLTRANSFERASE"/>
    <property type="match status" value="1"/>
</dbReference>
<dbReference type="PANTHER" id="PTHR43285:SF2">
    <property type="entry name" value="ANTHRANILATE PHOSPHORIBOSYLTRANSFERASE"/>
    <property type="match status" value="1"/>
</dbReference>
<dbReference type="Pfam" id="PF02885">
    <property type="entry name" value="Glycos_trans_3N"/>
    <property type="match status" value="1"/>
</dbReference>
<dbReference type="Pfam" id="PF00591">
    <property type="entry name" value="Glycos_transf_3"/>
    <property type="match status" value="1"/>
</dbReference>
<dbReference type="SUPFAM" id="SSF52418">
    <property type="entry name" value="Nucleoside phosphorylase/phosphoribosyltransferase catalytic domain"/>
    <property type="match status" value="1"/>
</dbReference>
<dbReference type="SUPFAM" id="SSF47648">
    <property type="entry name" value="Nucleoside phosphorylase/phosphoribosyltransferase N-terminal domain"/>
    <property type="match status" value="1"/>
</dbReference>
<comment type="function">
    <text evidence="1">Catalyzes the transfer of the phosphoribosyl group of 5-phosphorylribose-1-pyrophosphate (PRPP) to anthranilate to yield N-(5'-phosphoribosyl)-anthranilate (PRA).</text>
</comment>
<comment type="catalytic activity">
    <reaction evidence="1">
        <text>N-(5-phospho-beta-D-ribosyl)anthranilate + diphosphate = 5-phospho-alpha-D-ribose 1-diphosphate + anthranilate</text>
        <dbReference type="Rhea" id="RHEA:11768"/>
        <dbReference type="ChEBI" id="CHEBI:16567"/>
        <dbReference type="ChEBI" id="CHEBI:18277"/>
        <dbReference type="ChEBI" id="CHEBI:33019"/>
        <dbReference type="ChEBI" id="CHEBI:58017"/>
        <dbReference type="EC" id="2.4.2.18"/>
    </reaction>
</comment>
<comment type="cofactor">
    <cofactor evidence="1">
        <name>Mg(2+)</name>
        <dbReference type="ChEBI" id="CHEBI:18420"/>
    </cofactor>
    <text evidence="1">Binds 2 magnesium ions per monomer.</text>
</comment>
<comment type="pathway">
    <text evidence="1">Amino-acid biosynthesis; L-tryptophan biosynthesis; L-tryptophan from chorismate: step 2/5.</text>
</comment>
<comment type="subunit">
    <text evidence="1">Homodimer.</text>
</comment>
<comment type="similarity">
    <text evidence="1">Belongs to the anthranilate phosphoribosyltransferase family.</text>
</comment>
<evidence type="ECO:0000255" key="1">
    <source>
        <dbReference type="HAMAP-Rule" id="MF_00211"/>
    </source>
</evidence>
<sequence>MISEVLDDIIDKNRNLTVDEAYECMDDLVSGNYPNVVVSSFLTALRMKGETIDEITGLTRSMKNHAVQIDYKPEDYLIETCGTGGDTFKTFNVSTVASIIASAGGAKISKHGNRSVSSKFGGADALEALGVNIELSPEKVINSIDKCNFAFIFAPIYHVATKNVMMIRKQLKTRTVFNLLGPISCPTNVNARLTGIYDPELLETIAKVAMNLGVECGMIVHGFDENGNPAMDEISNIGKTKVAFIDNGDITVKYITPEDFGLSFSKPEDIVAPETPQEHIQIIYNILNNVTTTSQDRARLDLCLMNSASILYLTKKVDSLEEGVIYSRKLIEDGSAKKQLEKIIKYSNE</sequence>